<reference key="1">
    <citation type="journal article" date="2003" name="J. Virol.">
        <title>Amplification of a complete simian immunodeficiency virus genome from fecal RNA of a wild chimpanzee.</title>
        <authorList>
            <person name="Santiago M.L."/>
            <person name="Bibollet-Ruche F."/>
            <person name="Bailes E."/>
            <person name="Kamenya S."/>
            <person name="Muller M.N."/>
            <person name="Lukasik M."/>
            <person name="Pusey A.E."/>
            <person name="Collins D.A."/>
            <person name="Wrangham R.W."/>
            <person name="Goodall J."/>
            <person name="Shaw G.M."/>
            <person name="Sharp P.M."/>
            <person name="Hahn B.H."/>
        </authorList>
    </citation>
    <scope>NUCLEOTIDE SEQUENCE [GENOMIC RNA]</scope>
</reference>
<comment type="function">
    <text evidence="1">Counteracts the innate antiviral activity of APOBEC3G. Forms a complex with host APOBEC3G thus preventing the entry of this lethally hypermutating enzyme into progeny virions. Functions as an adapter molecule, recruiting APOBEC3G to the ubiquitin-proteasome machinery. Targets APOBEC3G for degradation through the assembly with elongin BC complex, CUL5 and RBX1. Binds viral RNA and affects the stability of viral nucleoprotein core. May play a role in viral morphology. Interacts with host ABCE1, which seems to be involved in lentiviruses capsid formation and displays RNase L inhibitor activity. This interaction may play a role in protecting viral RNA from damage during viral assembly. May interact with host SAT, which is a regulator of polyamine cell level. This interaction may be relevant since polyamines affect viral RNA properties (By similarity).</text>
</comment>
<comment type="subunit">
    <text evidence="1">Homomultimer; in vitro and presumably in vivo. Interacts with viral Pr55Gag precursor, host APOBEC3G, UBCE7IP1 isoform 3/ZIN, ABCE1 and possibly with SAT. Forms an E3 ligase complex by interacting with host CUL5 and elongin BC complex (ELOB and ELOC) (By similarity).</text>
</comment>
<comment type="subcellular location">
    <subcellularLocation>
        <location>Host cytoplasm</location>
    </subcellularLocation>
    <subcellularLocation>
        <location>Host cell membrane</location>
        <topology>Peripheral membrane protein</topology>
        <orientation>Cytoplasmic side</orientation>
    </subcellularLocation>
    <subcellularLocation>
        <location evidence="1">Virion</location>
    </subcellularLocation>
    <text>Seems to colocalize with intermediate filament vimentin. A fraction is associated with the cytoplasmic side of cellular membranes, presumably via the interaction with Pr55Gag precursor.</text>
</comment>
<comment type="induction">
    <text>Expressed late during infection in a Rev-dependent manner.</text>
</comment>
<comment type="domain">
    <text evidence="1">The BC-like-box motif mediates the interaction with elongin BC complex.</text>
</comment>
<comment type="domain">
    <text evidence="1">The HCCH motif (H-x(5)-C-x(18)-C-x(5)-H) mediates the interaction with CUL5.</text>
</comment>
<comment type="PTM">
    <text evidence="1">Highly phosphorylated on serine and threonine residues. Thr-97 and Ser-171 are phosphorylated by the mitogen activated kinase MAP4K1 (By similarity).</text>
</comment>
<comment type="PTM">
    <text evidence="1">Polyubiquitinated and degraded by the proteasome in the presence of APOBEC3G.</text>
</comment>
<comment type="miscellaneous">
    <text evidence="1">Required for replication in 'nonpermissive' cells, including primary T-cells, macrophages and certain T-cell lines, but is dispensable for replication in 'permissive' cell lines, such as 293T cells. In nonpermissive cells, Vif-defective viruses can produce virions, but they fail to complete reverse transcription and cannot successfully infect new cells (By similarity).</text>
</comment>
<comment type="miscellaneous">
    <text evidence="1">Vif-defective viruses show catastrophic failure in reverse transcription due to APOBEC-induced mutations that initiate a DNA base repair pathway and compromise the structural integrity of the ssDNA. In the absence of Vif, the virion is morphologically abnormal (By similarity).</text>
</comment>
<comment type="similarity">
    <text evidence="4">Belongs to the primate lentivirus group Vif protein family.</text>
</comment>
<protein>
    <recommendedName>
        <fullName>Virion infectivity factor</fullName>
        <shortName>Vif</shortName>
    </recommendedName>
</protein>
<sequence>MENRWQVQVVWMIDRMRLRTWTSLVKHHIFTTKCCKDWKYRHHYETDTPKRAGEIHIPLTERSKLVVLHYWGLACGERPWHLGHGIGLEWRQGKYSTQIDPETADQLIHTRYFTCFAAGAVRQAILGERILTFCHFQSGHRQVGTLQFLAFRKVVESQDKQPKGPRRPLPSVTKLTEDRWNKHRTTTGRRENHTLSGC</sequence>
<feature type="chain" id="PRO_0000248293" description="Virion infectivity factor" evidence="1">
    <location>
        <begin position="1"/>
        <end position="198"/>
    </location>
</feature>
<feature type="region of interest" description="RNA-binding" evidence="2">
    <location>
        <begin position="76"/>
        <end position="115"/>
    </location>
</feature>
<feature type="region of interest" description="Multimerization" evidence="1">
    <location>
        <begin position="152"/>
        <end position="170"/>
    </location>
</feature>
<feature type="region of interest" description="Disordered" evidence="3">
    <location>
        <begin position="159"/>
        <end position="198"/>
    </location>
</feature>
<feature type="region of interest" description="Membrane association" evidence="1">
    <location>
        <begin position="177"/>
        <end position="178"/>
    </location>
</feature>
<feature type="short sequence motif" description="HCCH motif" evidence="1">
    <location>
        <begin position="109"/>
        <end position="140"/>
    </location>
</feature>
<feature type="short sequence motif" description="BC-box-like motif" evidence="1">
    <location>
        <begin position="145"/>
        <end position="154"/>
    </location>
</feature>
<feature type="compositionally biased region" description="Basic and acidic residues" evidence="3">
    <location>
        <begin position="188"/>
        <end position="198"/>
    </location>
</feature>
<feature type="modified residue" description="Phosphothreonine; by host MAP4K1" evidence="1">
    <location>
        <position position="97"/>
    </location>
</feature>
<feature type="modified residue" description="Phosphothreonine; by host" evidence="1">
    <location>
        <position position="145"/>
    </location>
</feature>
<feature type="modified residue" description="Phosphoserine; by host MAP4K1" evidence="1">
    <location>
        <position position="171"/>
    </location>
</feature>
<keyword id="KW-1032">Host cell membrane</keyword>
<keyword id="KW-1035">Host cytoplasm</keyword>
<keyword id="KW-1043">Host membrane</keyword>
<keyword id="KW-0945">Host-virus interaction</keyword>
<keyword id="KW-0472">Membrane</keyword>
<keyword id="KW-0597">Phosphoprotein</keyword>
<keyword id="KW-1185">Reference proteome</keyword>
<keyword id="KW-0694">RNA-binding</keyword>
<keyword id="KW-0832">Ubl conjugation</keyword>
<keyword id="KW-0833">Ubl conjugation pathway</keyword>
<keyword id="KW-0946">Virion</keyword>
<dbReference type="EMBL" id="AF447763">
    <property type="protein sequence ID" value="AAO13961.1"/>
    <property type="molecule type" value="Genomic_RNA"/>
</dbReference>
<dbReference type="SMR" id="Q8AII0"/>
<dbReference type="Proteomes" id="UP000007222">
    <property type="component" value="Segment"/>
</dbReference>
<dbReference type="GO" id="GO:0030430">
    <property type="term" value="C:host cell cytoplasm"/>
    <property type="evidence" value="ECO:0007669"/>
    <property type="project" value="UniProtKB-SubCell"/>
</dbReference>
<dbReference type="GO" id="GO:0020002">
    <property type="term" value="C:host cell plasma membrane"/>
    <property type="evidence" value="ECO:0007669"/>
    <property type="project" value="UniProtKB-SubCell"/>
</dbReference>
<dbReference type="GO" id="GO:0016020">
    <property type="term" value="C:membrane"/>
    <property type="evidence" value="ECO:0007669"/>
    <property type="project" value="UniProtKB-KW"/>
</dbReference>
<dbReference type="GO" id="GO:0044423">
    <property type="term" value="C:virion component"/>
    <property type="evidence" value="ECO:0007669"/>
    <property type="project" value="UniProtKB-KW"/>
</dbReference>
<dbReference type="GO" id="GO:0003723">
    <property type="term" value="F:RNA binding"/>
    <property type="evidence" value="ECO:0007669"/>
    <property type="project" value="UniProtKB-KW"/>
</dbReference>
<dbReference type="GO" id="GO:0019058">
    <property type="term" value="P:viral life cycle"/>
    <property type="evidence" value="ECO:0007669"/>
    <property type="project" value="InterPro"/>
</dbReference>
<dbReference type="InterPro" id="IPR000475">
    <property type="entry name" value="Vif"/>
</dbReference>
<dbReference type="Pfam" id="PF00559">
    <property type="entry name" value="Vif"/>
    <property type="match status" value="1"/>
</dbReference>
<dbReference type="PRINTS" id="PR00349">
    <property type="entry name" value="VIRIONINFFCT"/>
</dbReference>
<accession>Q8AII0</accession>
<name>VIF_SIVTN</name>
<proteinExistence type="evidence at transcript level"/>
<evidence type="ECO:0000250" key="1"/>
<evidence type="ECO:0000255" key="2"/>
<evidence type="ECO:0000256" key="3">
    <source>
        <dbReference type="SAM" id="MobiDB-lite"/>
    </source>
</evidence>
<evidence type="ECO:0000305" key="4"/>
<organismHost>
    <name type="scientific">Pan troglodytes</name>
    <name type="common">Chimpanzee</name>
    <dbReference type="NCBI Taxonomy" id="9598"/>
</organismHost>
<organism>
    <name type="scientific">Simian immunodeficiency virus (isolate TAN1)</name>
    <name type="common">SIV-cpz</name>
    <name type="synonym">Chimpanzee immunodeficiency virus</name>
    <dbReference type="NCBI Taxonomy" id="388910"/>
    <lineage>
        <taxon>Viruses</taxon>
        <taxon>Riboviria</taxon>
        <taxon>Pararnavirae</taxon>
        <taxon>Artverviricota</taxon>
        <taxon>Revtraviricetes</taxon>
        <taxon>Ortervirales</taxon>
        <taxon>Retroviridae</taxon>
        <taxon>Orthoretrovirinae</taxon>
        <taxon>Lentivirus</taxon>
        <taxon>Simian immunodeficiency virus</taxon>
    </lineage>
</organism>